<gene>
    <name type="primary">rcnR</name>
    <name type="ordered locus">SDY_2279</name>
</gene>
<comment type="function">
    <text evidence="1">Repressor of rcnA expression. Acts by binding specifically to the rcnA promoter in the absence of nickel and cobalt. In the presence of one of these metals, it has a weaker affinity for rcnA promoter (By similarity).</text>
</comment>
<comment type="subcellular location">
    <subcellularLocation>
        <location evidence="2">Cytoplasm</location>
    </subcellularLocation>
</comment>
<comment type="similarity">
    <text evidence="2">Belongs to the FrmR/RcnR family.</text>
</comment>
<dbReference type="EMBL" id="CP000034">
    <property type="protein sequence ID" value="ABB62356.1"/>
    <property type="molecule type" value="Genomic_DNA"/>
</dbReference>
<dbReference type="RefSeq" id="WP_000019944.1">
    <property type="nucleotide sequence ID" value="NC_007606.1"/>
</dbReference>
<dbReference type="RefSeq" id="YP_403847.1">
    <property type="nucleotide sequence ID" value="NC_007606.1"/>
</dbReference>
<dbReference type="SMR" id="Q32E99"/>
<dbReference type="STRING" id="300267.SDY_2279"/>
<dbReference type="EnsemblBacteria" id="ABB62356">
    <property type="protein sequence ID" value="ABB62356"/>
    <property type="gene ID" value="SDY_2279"/>
</dbReference>
<dbReference type="GeneID" id="93775089"/>
<dbReference type="KEGG" id="sdy:SDY_2279"/>
<dbReference type="PATRIC" id="fig|300267.13.peg.2752"/>
<dbReference type="HOGENOM" id="CLU_130332_3_0_6"/>
<dbReference type="Proteomes" id="UP000002716">
    <property type="component" value="Chromosome"/>
</dbReference>
<dbReference type="GO" id="GO:0005737">
    <property type="term" value="C:cytoplasm"/>
    <property type="evidence" value="ECO:0007669"/>
    <property type="project" value="UniProtKB-SubCell"/>
</dbReference>
<dbReference type="GO" id="GO:0003677">
    <property type="term" value="F:DNA binding"/>
    <property type="evidence" value="ECO:0007669"/>
    <property type="project" value="UniProtKB-KW"/>
</dbReference>
<dbReference type="GO" id="GO:0046872">
    <property type="term" value="F:metal ion binding"/>
    <property type="evidence" value="ECO:0007669"/>
    <property type="project" value="InterPro"/>
</dbReference>
<dbReference type="GO" id="GO:0045892">
    <property type="term" value="P:negative regulation of DNA-templated transcription"/>
    <property type="evidence" value="ECO:0007669"/>
    <property type="project" value="UniProtKB-ARBA"/>
</dbReference>
<dbReference type="CDD" id="cd10153">
    <property type="entry name" value="RcnR-FrmR-like_DUF156"/>
    <property type="match status" value="1"/>
</dbReference>
<dbReference type="FunFam" id="1.20.58.1000:FF:000001">
    <property type="entry name" value="Transcriptional repressor RcnR"/>
    <property type="match status" value="1"/>
</dbReference>
<dbReference type="Gene3D" id="1.20.58.1000">
    <property type="entry name" value="Metal-sensitive repressor, helix protomer"/>
    <property type="match status" value="1"/>
</dbReference>
<dbReference type="InterPro" id="IPR003735">
    <property type="entry name" value="Metal_Tscrpt_repr"/>
</dbReference>
<dbReference type="InterPro" id="IPR038390">
    <property type="entry name" value="Metal_Tscrpt_repr_sf"/>
</dbReference>
<dbReference type="NCBIfam" id="NF011613">
    <property type="entry name" value="PRK15039.1"/>
    <property type="match status" value="1"/>
</dbReference>
<dbReference type="PANTHER" id="PTHR33677">
    <property type="entry name" value="TRANSCRIPTIONAL REPRESSOR FRMR-RELATED"/>
    <property type="match status" value="1"/>
</dbReference>
<dbReference type="PANTHER" id="PTHR33677:SF1">
    <property type="entry name" value="TRANSCRIPTIONAL REPRESSOR RCNR"/>
    <property type="match status" value="1"/>
</dbReference>
<dbReference type="Pfam" id="PF02583">
    <property type="entry name" value="Trns_repr_metal"/>
    <property type="match status" value="1"/>
</dbReference>
<reference key="1">
    <citation type="journal article" date="2005" name="Nucleic Acids Res.">
        <title>Genome dynamics and diversity of Shigella species, the etiologic agents of bacillary dysentery.</title>
        <authorList>
            <person name="Yang F."/>
            <person name="Yang J."/>
            <person name="Zhang X."/>
            <person name="Chen L."/>
            <person name="Jiang Y."/>
            <person name="Yan Y."/>
            <person name="Tang X."/>
            <person name="Wang J."/>
            <person name="Xiong Z."/>
            <person name="Dong J."/>
            <person name="Xue Y."/>
            <person name="Zhu Y."/>
            <person name="Xu X."/>
            <person name="Sun L."/>
            <person name="Chen S."/>
            <person name="Nie H."/>
            <person name="Peng J."/>
            <person name="Xu J."/>
            <person name="Wang Y."/>
            <person name="Yuan Z."/>
            <person name="Wen Y."/>
            <person name="Yao Z."/>
            <person name="Shen Y."/>
            <person name="Qiang B."/>
            <person name="Hou Y."/>
            <person name="Yu J."/>
            <person name="Jin Q."/>
        </authorList>
    </citation>
    <scope>NUCLEOTIDE SEQUENCE [LARGE SCALE GENOMIC DNA]</scope>
    <source>
        <strain>Sd197</strain>
    </source>
</reference>
<evidence type="ECO:0000250" key="1"/>
<evidence type="ECO:0000305" key="2"/>
<name>RCNR_SHIDS</name>
<feature type="chain" id="PRO_0000332704" description="Transcriptional repressor RcnR">
    <location>
        <begin position="1"/>
        <end position="90"/>
    </location>
</feature>
<keyword id="KW-0963">Cytoplasm</keyword>
<keyword id="KW-0238">DNA-binding</keyword>
<keyword id="KW-1185">Reference proteome</keyword>
<keyword id="KW-0678">Repressor</keyword>
<keyword id="KW-0804">Transcription</keyword>
<keyword id="KW-0805">Transcription regulation</keyword>
<accession>Q32E99</accession>
<organism>
    <name type="scientific">Shigella dysenteriae serotype 1 (strain Sd197)</name>
    <dbReference type="NCBI Taxonomy" id="300267"/>
    <lineage>
        <taxon>Bacteria</taxon>
        <taxon>Pseudomonadati</taxon>
        <taxon>Pseudomonadota</taxon>
        <taxon>Gammaproteobacteria</taxon>
        <taxon>Enterobacterales</taxon>
        <taxon>Enterobacteriaceae</taxon>
        <taxon>Shigella</taxon>
    </lineage>
</organism>
<sequence length="90" mass="10134">MSHTIRDKQKLKARASKIQGQVVALKKMLDEPHECAAVLQQIAAIRGAVNGLMREVIKGHLTEHIVHQGDELKREEDLDVVLKVLDSYIK</sequence>
<proteinExistence type="inferred from homology"/>
<protein>
    <recommendedName>
        <fullName>Transcriptional repressor RcnR</fullName>
    </recommendedName>
</protein>